<organism>
    <name type="scientific">Homo sapiens</name>
    <name type="common">Human</name>
    <dbReference type="NCBI Taxonomy" id="9606"/>
    <lineage>
        <taxon>Eukaryota</taxon>
        <taxon>Metazoa</taxon>
        <taxon>Chordata</taxon>
        <taxon>Craniata</taxon>
        <taxon>Vertebrata</taxon>
        <taxon>Euteleostomi</taxon>
        <taxon>Mammalia</taxon>
        <taxon>Eutheria</taxon>
        <taxon>Euarchontoglires</taxon>
        <taxon>Primates</taxon>
        <taxon>Haplorrhini</taxon>
        <taxon>Catarrhini</taxon>
        <taxon>Hominidae</taxon>
        <taxon>Homo</taxon>
    </lineage>
</organism>
<accession>P56385</accession>
<accession>Q0D2L9</accession>
<protein>
    <recommendedName>
        <fullName evidence="5">ATP synthase F(0) complex subunit e, mitochondrial</fullName>
        <shortName>ATPase subunit e</shortName>
    </recommendedName>
    <alternativeName>
        <fullName evidence="5">ATP synthase membrane subunit e</fullName>
    </alternativeName>
    <component>
        <recommendedName>
            <fullName>ATP synthase F(0) complex subunit e, mitochondrial, N-terminally processed</fullName>
        </recommendedName>
    </component>
</protein>
<reference key="1">
    <citation type="submission" date="1997-11" db="EMBL/GenBank/DDBJ databases">
        <title>Molecular cloning of a human homolog of rat ATP synthase subunit e from human fetal brain.</title>
        <authorList>
            <person name="Fujiwara T."/>
            <person name="Kawai A."/>
            <person name="Shimizu F."/>
            <person name="Shinomiya K."/>
            <person name="Hirano H."/>
            <person name="Okuno S."/>
            <person name="Ozaki K."/>
            <person name="Katagiri T."/>
            <person name="Takeda S."/>
            <person name="Kuga Y."/>
            <person name="Shimada Y."/>
            <person name="Nagata M."/>
            <person name="Takaichi A."/>
            <person name="Watanabe T."/>
            <person name="Horie M."/>
            <person name="Nakamura Y."/>
            <person name="Takahashi E."/>
            <person name="Hirai Y."/>
        </authorList>
    </citation>
    <scope>NUCLEOTIDE SEQUENCE [MRNA]</scope>
    <source>
        <tissue>Fetal brain</tissue>
    </source>
</reference>
<reference key="2">
    <citation type="submission" date="2003-05" db="EMBL/GenBank/DDBJ databases">
        <title>Cloning of human full-length CDSs in BD Creator(TM) system donor vector.</title>
        <authorList>
            <person name="Kalnine N."/>
            <person name="Chen X."/>
            <person name="Rolfs A."/>
            <person name="Halleck A."/>
            <person name="Hines L."/>
            <person name="Eisenstein S."/>
            <person name="Koundinya M."/>
            <person name="Raphael J."/>
            <person name="Moreira D."/>
            <person name="Kelley T."/>
            <person name="LaBaer J."/>
            <person name="Lin Y."/>
            <person name="Phelan M."/>
            <person name="Farmer A."/>
        </authorList>
    </citation>
    <scope>NUCLEOTIDE SEQUENCE [LARGE SCALE MRNA]</scope>
</reference>
<reference key="3">
    <citation type="journal article" date="2004" name="Genome Res.">
        <title>The status, quality, and expansion of the NIH full-length cDNA project: the Mammalian Gene Collection (MGC).</title>
        <authorList>
            <consortium name="The MGC Project Team"/>
        </authorList>
    </citation>
    <scope>NUCLEOTIDE SEQUENCE [LARGE SCALE MRNA]</scope>
    <source>
        <tissue>Kidney</tissue>
    </source>
</reference>
<reference key="4">
    <citation type="journal article" date="2009" name="Proc. Natl. Acad. Sci. U.S.A.">
        <title>Global profiling of protease cleavage sites by chemoselective labeling of protein N-termini.</title>
        <authorList>
            <person name="Xu G."/>
            <person name="Shin S.B."/>
            <person name="Jaffrey S.R."/>
        </authorList>
    </citation>
    <scope>PROTEIN SEQUENCE [LARGE SCALE ANALYSIS] OF 2-16</scope>
    <source>
        <tissue>Leukemic T-cell</tissue>
    </source>
</reference>
<reference key="5">
    <citation type="journal article" date="2011" name="BMC Syst. Biol.">
        <title>Initial characterization of the human central proteome.</title>
        <authorList>
            <person name="Burkard T.R."/>
            <person name="Planyavsky M."/>
            <person name="Kaupe I."/>
            <person name="Breitwieser F.P."/>
            <person name="Buerckstuemmer T."/>
            <person name="Bennett K.L."/>
            <person name="Superti-Furga G."/>
            <person name="Colinge J."/>
        </authorList>
    </citation>
    <scope>IDENTIFICATION BY MASS SPECTROMETRY [LARGE SCALE ANALYSIS]</scope>
</reference>
<reference key="6">
    <citation type="journal article" date="2012" name="Proc. Natl. Acad. Sci. U.S.A.">
        <title>N-terminal acetylome analyses and functional insights of the N-terminal acetyltransferase NatB.</title>
        <authorList>
            <person name="Van Damme P."/>
            <person name="Lasa M."/>
            <person name="Polevoda B."/>
            <person name="Gazquez C."/>
            <person name="Elosegui-Artola A."/>
            <person name="Kim D.S."/>
            <person name="De Juan-Pardo E."/>
            <person name="Demeyer K."/>
            <person name="Hole K."/>
            <person name="Larrea E."/>
            <person name="Timmerman E."/>
            <person name="Prieto J."/>
            <person name="Arnesen T."/>
            <person name="Sherman F."/>
            <person name="Gevaert K."/>
            <person name="Aldabe R."/>
        </authorList>
    </citation>
    <scope>IDENTIFICATION BY MASS SPECTROMETRY [LARGE SCALE ANALYSIS]</scope>
</reference>
<reference key="7">
    <citation type="journal article" date="2014" name="J. Proteomics">
        <title>An enzyme assisted RP-RPLC approach for in-depth analysis of human liver phosphoproteome.</title>
        <authorList>
            <person name="Bian Y."/>
            <person name="Song C."/>
            <person name="Cheng K."/>
            <person name="Dong M."/>
            <person name="Wang F."/>
            <person name="Huang J."/>
            <person name="Sun D."/>
            <person name="Wang L."/>
            <person name="Ye M."/>
            <person name="Zou H."/>
        </authorList>
    </citation>
    <scope>IDENTIFICATION BY MASS SPECTROMETRY [LARGE SCALE ANALYSIS]</scope>
    <source>
        <tissue>Liver</tissue>
    </source>
</reference>
<reference key="8">
    <citation type="journal article" date="2015" name="Proteomics">
        <title>N-terminome analysis of the human mitochondrial proteome.</title>
        <authorList>
            <person name="Vaca Jacome A.S."/>
            <person name="Rabilloud T."/>
            <person name="Schaeffer-Reiss C."/>
            <person name="Rompais M."/>
            <person name="Ayoub D."/>
            <person name="Lane L."/>
            <person name="Bairoch A."/>
            <person name="Van Dorsselaer A."/>
            <person name="Carapito C."/>
        </authorList>
    </citation>
    <scope>CLEAVAGE OF INITIATOR METHIONINE [LARGE SCALE ANALYSIS]</scope>
    <scope>IDENTIFICATION BY MASS SPECTROMETRY [LARGE SCALE ANALYSIS]</scope>
</reference>
<reference evidence="8 9 10 11 12 13 14 15" key="9">
    <citation type="journal article" date="2023" name="Mol. Cell">
        <title>Structure of the human ATP synthase.</title>
        <authorList>
            <person name="Lai Y."/>
            <person name="Zhang Y."/>
            <person name="Zhou S."/>
            <person name="Xu J."/>
            <person name="Du Z."/>
            <person name="Feng Z."/>
            <person name="Yu L."/>
            <person name="Zhao Z."/>
            <person name="Wang W."/>
            <person name="Tang Y."/>
            <person name="Yang X."/>
            <person name="Guddat L.W."/>
            <person name="Liu F."/>
            <person name="Gao Y."/>
            <person name="Rao Z."/>
            <person name="Gong H."/>
        </authorList>
    </citation>
    <scope>STRUCTURE BY ELECTRON MICROSCOPY (2.53 ANGSTROMS)</scope>
    <scope>IDENTIFICATION IN THE ATP SYNTHASE COMPLEX</scope>
    <scope>FUNCTION</scope>
    <scope>SUBUNIT</scope>
</reference>
<keyword id="KW-0002">3D-structure</keyword>
<keyword id="KW-0007">Acetylation</keyword>
<keyword id="KW-0066">ATP synthesis</keyword>
<keyword id="KW-0138">CF(0)</keyword>
<keyword id="KW-0903">Direct protein sequencing</keyword>
<keyword id="KW-0375">Hydrogen ion transport</keyword>
<keyword id="KW-0406">Ion transport</keyword>
<keyword id="KW-0472">Membrane</keyword>
<keyword id="KW-0496">Mitochondrion</keyword>
<keyword id="KW-0999">Mitochondrion inner membrane</keyword>
<keyword id="KW-0597">Phosphoprotein</keyword>
<keyword id="KW-1267">Proteomics identification</keyword>
<keyword id="KW-1185">Reference proteome</keyword>
<keyword id="KW-0813">Transport</keyword>
<gene>
    <name evidence="7" type="primary">ATP5ME</name>
    <name evidence="7" type="synonym">ATP5I</name>
    <name type="synonym">ATP5K</name>
</gene>
<comment type="function">
    <text evidence="1 4 6">Subunit e, of the mitochondrial membrane ATP synthase complex (F(1)F(0) ATP synthase or Complex V) that produces ATP from ADP in the presence of a proton gradient across the membrane which is generated by electron transport complexes of the respiratory chain (PubMed:37244256). ATP synthase complex consist of a soluble F(1) head domain - the catalytic core - and a membrane F(1) domain - the membrane proton channel (PubMed:37244256). These two domains are linked by a central stalk rotating inside the F(1) region and a stationary peripheral stalk (PubMed:37244256). During catalysis, ATP synthesis in the catalytic domain of F(1) is coupled via a rotary mechanism of the central stalk subunits to proton translocation (Probable). In vivo, can only synthesize ATP although its ATP hydrolase activity can be activated artificially in vitro (By similarity). Part of the complex F(0) domain (PubMed:37244256).</text>
</comment>
<comment type="subunit">
    <text evidence="4">Component of the ATP synthase complex composed at least of ATP5F1A/subunit alpha, ATP5F1B/subunit beta, ATP5MC1/subunit c (homooctomer), MT-ATP6/subunit a, MT-ATP8/subunit 8, ATP5ME/subunit e, ATP5MF/subunit f, ATP5MG/subunit g, ATP5MK/subunit k, ATP5MJ/subunit j, ATP5F1C/subunit gamma, ATP5F1D/subunit delta, ATP5F1E/subunit epsilon, ATP5PF/subunit F6, ATP5PB/subunit b, ATP5PD/subunit d, ATP5PO/subunit OSCP (PubMed:37244256). ATP synthase complex consists of a soluble F(1) head domain (subunits alpha(3) and beta(3)) - the catalytic core - and a membrane F(0) domain - the membrane proton channel (subunits c, a, 8, e, f, g, k and j) (PubMed:37244256). These two domains are linked by a central stalk (subunits gamma, delta, and epsilon) rotating inside the F1 region and a stationary peripheral stalk (subunits F6, b, d, and OSCP) (PubMed:37244256).</text>
</comment>
<comment type="interaction">
    <interactant intactId="EBI-2270000">
        <id>P56385</id>
    </interactant>
    <interactant intactId="EBI-7062247">
        <id>Q9UHD4</id>
        <label>CIDEB</label>
    </interactant>
    <organismsDiffer>false</organismsDiffer>
    <experiments>3</experiments>
</comment>
<comment type="interaction">
    <interactant intactId="EBI-2270000">
        <id>P56385</id>
    </interactant>
    <interactant intactId="EBI-742688">
        <id>Q9NZD8</id>
        <label>SPG21</label>
    </interactant>
    <organismsDiffer>false</organismsDiffer>
    <experiments>3</experiments>
</comment>
<comment type="subcellular location">
    <subcellularLocation>
        <location>Mitochondrion</location>
    </subcellularLocation>
    <subcellularLocation>
        <location>Mitochondrion inner membrane</location>
    </subcellularLocation>
</comment>
<comment type="similarity">
    <text evidence="5">Belongs to the ATPase e subunit family.</text>
</comment>
<dbReference type="EMBL" id="D50371">
    <property type="protein sequence ID" value="BAA23322.1"/>
    <property type="molecule type" value="mRNA"/>
</dbReference>
<dbReference type="EMBL" id="BT006922">
    <property type="protein sequence ID" value="AAP35568.1"/>
    <property type="molecule type" value="mRNA"/>
</dbReference>
<dbReference type="EMBL" id="BC003679">
    <property type="protein sequence ID" value="AAH03679.1"/>
    <property type="molecule type" value="mRNA"/>
</dbReference>
<dbReference type="EMBL" id="BC105610">
    <property type="protein sequence ID" value="AAI05611.1"/>
    <property type="molecule type" value="mRNA"/>
</dbReference>
<dbReference type="CCDS" id="CCDS3337.1"/>
<dbReference type="RefSeq" id="NP_009031.1">
    <property type="nucleotide sequence ID" value="NM_007100.4"/>
</dbReference>
<dbReference type="PDB" id="8H9F">
    <property type="method" value="EM"/>
    <property type="resolution" value="2.69 A"/>
    <property type="chains" value="T=1-69"/>
</dbReference>
<dbReference type="PDB" id="8H9J">
    <property type="method" value="EM"/>
    <property type="resolution" value="3.26 A"/>
    <property type="chains" value="T=1-69"/>
</dbReference>
<dbReference type="PDB" id="8H9M">
    <property type="method" value="EM"/>
    <property type="resolution" value="3.00 A"/>
    <property type="chains" value="T=1-69"/>
</dbReference>
<dbReference type="PDB" id="8H9Q">
    <property type="method" value="EM"/>
    <property type="resolution" value="3.47 A"/>
    <property type="chains" value="T=1-69"/>
</dbReference>
<dbReference type="PDB" id="8H9S">
    <property type="method" value="EM"/>
    <property type="resolution" value="2.53 A"/>
    <property type="chains" value="T=1-69"/>
</dbReference>
<dbReference type="PDB" id="8H9T">
    <property type="method" value="EM"/>
    <property type="resolution" value="2.77 A"/>
    <property type="chains" value="T=1-69"/>
</dbReference>
<dbReference type="PDB" id="8H9U">
    <property type="method" value="EM"/>
    <property type="resolution" value="2.61 A"/>
    <property type="chains" value="T=1-69"/>
</dbReference>
<dbReference type="PDB" id="8H9V">
    <property type="method" value="EM"/>
    <property type="resolution" value="3.02 A"/>
    <property type="chains" value="T=1-69"/>
</dbReference>
<dbReference type="PDB" id="8KHF">
    <property type="method" value="EM"/>
    <property type="resolution" value="3.13 A"/>
    <property type="chains" value="T=1-69"/>
</dbReference>
<dbReference type="PDB" id="8KI3">
    <property type="method" value="EM"/>
    <property type="resolution" value="2.89 A"/>
    <property type="chains" value="T=1-69"/>
</dbReference>
<dbReference type="PDBsum" id="8H9F"/>
<dbReference type="PDBsum" id="8H9J"/>
<dbReference type="PDBsum" id="8H9M"/>
<dbReference type="PDBsum" id="8H9Q"/>
<dbReference type="PDBsum" id="8H9S"/>
<dbReference type="PDBsum" id="8H9T"/>
<dbReference type="PDBsum" id="8H9U"/>
<dbReference type="PDBsum" id="8H9V"/>
<dbReference type="PDBsum" id="8KHF"/>
<dbReference type="PDBsum" id="8KI3"/>
<dbReference type="EMDB" id="EMD-34565"/>
<dbReference type="EMDB" id="EMD-34569"/>
<dbReference type="EMDB" id="EMD-34573"/>
<dbReference type="EMDB" id="EMD-34577"/>
<dbReference type="EMDB" id="EMD-34580"/>
<dbReference type="EMDB" id="EMD-34581"/>
<dbReference type="EMDB" id="EMD-34582"/>
<dbReference type="EMDB" id="EMD-34583"/>
<dbReference type="EMDB" id="EMD-37243"/>
<dbReference type="EMDB" id="EMD-37251"/>
<dbReference type="SMR" id="P56385"/>
<dbReference type="BioGRID" id="107005">
    <property type="interactions" value="131"/>
</dbReference>
<dbReference type="ComplexPortal" id="CPX-6151">
    <property type="entry name" value="Mitochondrial proton-transporting ATP synthase complex"/>
</dbReference>
<dbReference type="CORUM" id="P56385"/>
<dbReference type="FunCoup" id="P56385">
    <property type="interactions" value="1333"/>
</dbReference>
<dbReference type="IntAct" id="P56385">
    <property type="interactions" value="76"/>
</dbReference>
<dbReference type="MINT" id="P56385"/>
<dbReference type="STRING" id="9606.ENSP00000306003"/>
<dbReference type="DrugBank" id="DB12695">
    <property type="generic name" value="Phenethyl Isothiocyanate"/>
</dbReference>
<dbReference type="TCDB" id="3.A.2.1.15">
    <property type="family name" value="the h+- or na+-translocating f-type, v-type and a-type atpase (f-atpase) superfamily"/>
</dbReference>
<dbReference type="GlyGen" id="P56385">
    <property type="glycosylation" value="1 site, 1 O-linked glycan (1 site)"/>
</dbReference>
<dbReference type="iPTMnet" id="P56385"/>
<dbReference type="PhosphoSitePlus" id="P56385"/>
<dbReference type="SwissPalm" id="P56385"/>
<dbReference type="BioMuta" id="ATP5I"/>
<dbReference type="DMDM" id="3023369"/>
<dbReference type="jPOST" id="P56385"/>
<dbReference type="MassIVE" id="P56385"/>
<dbReference type="PaxDb" id="9606-ENSP00000306003"/>
<dbReference type="PeptideAtlas" id="P56385"/>
<dbReference type="ProteomicsDB" id="56918"/>
<dbReference type="Pumba" id="P56385"/>
<dbReference type="TopDownProteomics" id="P56385"/>
<dbReference type="Antibodypedia" id="22135">
    <property type="antibodies" value="184 antibodies from 28 providers"/>
</dbReference>
<dbReference type="DNASU" id="521"/>
<dbReference type="Ensembl" id="ENST00000304312.5">
    <property type="protein sequence ID" value="ENSP00000306003.4"/>
    <property type="gene ID" value="ENSG00000169020.10"/>
</dbReference>
<dbReference type="GeneID" id="521"/>
<dbReference type="KEGG" id="hsa:521"/>
<dbReference type="MANE-Select" id="ENST00000304312.5">
    <property type="protein sequence ID" value="ENSP00000306003.4"/>
    <property type="RefSeq nucleotide sequence ID" value="NM_007100.4"/>
    <property type="RefSeq protein sequence ID" value="NP_009031.1"/>
</dbReference>
<dbReference type="UCSC" id="uc003gas.3">
    <property type="organism name" value="human"/>
</dbReference>
<dbReference type="AGR" id="HGNC:846"/>
<dbReference type="CTD" id="521"/>
<dbReference type="DisGeNET" id="521"/>
<dbReference type="GeneCards" id="ATP5ME"/>
<dbReference type="HGNC" id="HGNC:846">
    <property type="gene designation" value="ATP5ME"/>
</dbReference>
<dbReference type="HPA" id="ENSG00000169020">
    <property type="expression patterns" value="Tissue enhanced (skeletal)"/>
</dbReference>
<dbReference type="MalaCards" id="ATP5ME"/>
<dbReference type="MIM" id="601519">
    <property type="type" value="gene"/>
</dbReference>
<dbReference type="neXtProt" id="NX_P56385"/>
<dbReference type="OpenTargets" id="ENSG00000169020"/>
<dbReference type="PharmGKB" id="PA25136"/>
<dbReference type="VEuPathDB" id="HostDB:ENSG00000169020"/>
<dbReference type="eggNOG" id="KOG4326">
    <property type="taxonomic scope" value="Eukaryota"/>
</dbReference>
<dbReference type="GeneTree" id="ENSGT00390000005102"/>
<dbReference type="HOGENOM" id="CLU_180903_0_0_1"/>
<dbReference type="InParanoid" id="P56385"/>
<dbReference type="OMA" id="CWRIFET"/>
<dbReference type="OrthoDB" id="9982108at2759"/>
<dbReference type="PAN-GO" id="P56385">
    <property type="GO annotations" value="1 GO annotation based on evolutionary models"/>
</dbReference>
<dbReference type="PhylomeDB" id="P56385"/>
<dbReference type="TreeFam" id="TF314719"/>
<dbReference type="BioCyc" id="MetaCyc:HS09866-MONOMER"/>
<dbReference type="PathwayCommons" id="P56385"/>
<dbReference type="Reactome" id="R-HSA-163210">
    <property type="pathway name" value="Formation of ATP by chemiosmotic coupling"/>
</dbReference>
<dbReference type="Reactome" id="R-HSA-8949613">
    <property type="pathway name" value="Cristae formation"/>
</dbReference>
<dbReference type="SignaLink" id="P56385"/>
<dbReference type="SIGNOR" id="P56385"/>
<dbReference type="BioGRID-ORCS" id="521">
    <property type="hits" value="386 hits in 1168 CRISPR screens"/>
</dbReference>
<dbReference type="CD-CODE" id="FB4E32DD">
    <property type="entry name" value="Presynaptic clusters and postsynaptic densities"/>
</dbReference>
<dbReference type="ChiTaRS" id="ATP5I">
    <property type="organism name" value="human"/>
</dbReference>
<dbReference type="GeneWiki" id="ATP5I"/>
<dbReference type="GenomeRNAi" id="521"/>
<dbReference type="Pharos" id="P56385">
    <property type="development level" value="Tbio"/>
</dbReference>
<dbReference type="PRO" id="PR:P56385"/>
<dbReference type="Proteomes" id="UP000005640">
    <property type="component" value="Chromosome 4"/>
</dbReference>
<dbReference type="RNAct" id="P56385">
    <property type="molecule type" value="protein"/>
</dbReference>
<dbReference type="Bgee" id="ENSG00000169020">
    <property type="expression patterns" value="Expressed in apex of heart and 209 other cell types or tissues"/>
</dbReference>
<dbReference type="GO" id="GO:0005743">
    <property type="term" value="C:mitochondrial inner membrane"/>
    <property type="evidence" value="ECO:0000304"/>
    <property type="project" value="Reactome"/>
</dbReference>
<dbReference type="GO" id="GO:0005739">
    <property type="term" value="C:mitochondrion"/>
    <property type="evidence" value="ECO:0000314"/>
    <property type="project" value="HPA"/>
</dbReference>
<dbReference type="GO" id="GO:0045259">
    <property type="term" value="C:proton-transporting ATP synthase complex"/>
    <property type="evidence" value="ECO:0000314"/>
    <property type="project" value="UniProtKB"/>
</dbReference>
<dbReference type="GO" id="GO:0044877">
    <property type="term" value="F:protein-containing complex binding"/>
    <property type="evidence" value="ECO:0007669"/>
    <property type="project" value="Ensembl"/>
</dbReference>
<dbReference type="GO" id="GO:0015078">
    <property type="term" value="F:proton transmembrane transporter activity"/>
    <property type="evidence" value="ECO:0007669"/>
    <property type="project" value="InterPro"/>
</dbReference>
<dbReference type="GO" id="GO:0015986">
    <property type="term" value="P:proton motive force-driven ATP synthesis"/>
    <property type="evidence" value="ECO:0000303"/>
    <property type="project" value="ComplexPortal"/>
</dbReference>
<dbReference type="GO" id="GO:0042776">
    <property type="term" value="P:proton motive force-driven mitochondrial ATP synthesis"/>
    <property type="evidence" value="ECO:0000314"/>
    <property type="project" value="UniProtKB"/>
</dbReference>
<dbReference type="InterPro" id="IPR008386">
    <property type="entry name" value="ATP_synth_F0_esu_mt"/>
</dbReference>
<dbReference type="PANTHER" id="PTHR12427">
    <property type="entry name" value="ATP SYNTHASE E CHAIN, MITOCHONDRIAL"/>
    <property type="match status" value="1"/>
</dbReference>
<dbReference type="PANTHER" id="PTHR12427:SF1">
    <property type="entry name" value="ATP SYNTHASE SUBUNIT E, MITOCHONDRIAL"/>
    <property type="match status" value="1"/>
</dbReference>
<dbReference type="Pfam" id="PF05680">
    <property type="entry name" value="ATP-synt_E"/>
    <property type="match status" value="1"/>
</dbReference>
<proteinExistence type="evidence at protein level"/>
<name>ATP5I_HUMAN</name>
<sequence>MVPPVQVSPLIKLGRYSALFLGVAYGATRYNYLKPRAEEERRIAAEEKKKQDELKRIARELAEDDSILK</sequence>
<evidence type="ECO:0000250" key="1">
    <source>
        <dbReference type="UniProtKB" id="P19483"/>
    </source>
</evidence>
<evidence type="ECO:0000250" key="2">
    <source>
        <dbReference type="UniProtKB" id="P29419"/>
    </source>
</evidence>
<evidence type="ECO:0000250" key="3">
    <source>
        <dbReference type="UniProtKB" id="Q06185"/>
    </source>
</evidence>
<evidence type="ECO:0000269" key="4">
    <source>
    </source>
</evidence>
<evidence type="ECO:0000305" key="5"/>
<evidence type="ECO:0000305" key="6">
    <source>
    </source>
</evidence>
<evidence type="ECO:0000312" key="7">
    <source>
        <dbReference type="HGNC" id="HGNC:846"/>
    </source>
</evidence>
<evidence type="ECO:0007744" key="8">
    <source>
        <dbReference type="PDB" id="8H9F"/>
    </source>
</evidence>
<evidence type="ECO:0007744" key="9">
    <source>
        <dbReference type="PDB" id="8H9J"/>
    </source>
</evidence>
<evidence type="ECO:0007744" key="10">
    <source>
        <dbReference type="PDB" id="8H9M"/>
    </source>
</evidence>
<evidence type="ECO:0007744" key="11">
    <source>
        <dbReference type="PDB" id="8H9Q"/>
    </source>
</evidence>
<evidence type="ECO:0007744" key="12">
    <source>
        <dbReference type="PDB" id="8H9S"/>
    </source>
</evidence>
<evidence type="ECO:0007744" key="13">
    <source>
        <dbReference type="PDB" id="8H9T"/>
    </source>
</evidence>
<evidence type="ECO:0007744" key="14">
    <source>
        <dbReference type="PDB" id="8H9U"/>
    </source>
</evidence>
<evidence type="ECO:0007744" key="15">
    <source>
        <dbReference type="PDB" id="8H9V"/>
    </source>
</evidence>
<evidence type="ECO:0007744" key="16">
    <source>
    </source>
</evidence>
<evidence type="ECO:0007829" key="17">
    <source>
        <dbReference type="PDB" id="8H9M"/>
    </source>
</evidence>
<feature type="chain" id="PRO_0000434346" description="ATP synthase F(0) complex subunit e, mitochondrial">
    <location>
        <begin position="1"/>
        <end position="69"/>
    </location>
</feature>
<feature type="initiator methionine" description="Removed; alternate" evidence="16">
    <location>
        <position position="1"/>
    </location>
</feature>
<feature type="chain" id="PRO_0000071684" description="ATP synthase F(0) complex subunit e, mitochondrial, N-terminally processed">
    <location>
        <begin position="2"/>
        <end position="69"/>
    </location>
</feature>
<feature type="modified residue" description="N6-acetyllysine" evidence="3">
    <location>
        <position position="34"/>
    </location>
</feature>
<feature type="modified residue" description="Phosphoserine" evidence="2">
    <location>
        <position position="66"/>
    </location>
</feature>
<feature type="helix" evidence="17">
    <location>
        <begin position="9"/>
        <end position="44"/>
    </location>
</feature>